<proteinExistence type="inferred from homology"/>
<sequence>MEEITINIDKIKINDDWKEFLRDEFQKKYFLEIKKQYLNAINQNIIIYPPANLIFNAFNLCPLKEIKIIILGQDPYHQPNQAMGLSFSVPKNVKIPPSLNNVFKELQNDLNITPAKSGDLSSWAKQGVLLLNSILSVEANKAASHSSWGWQEFSDAIIHKLSNEKSGLVFMLWGNYAKNKEILIDNAKHLILKAAHPSPLARTGFLGCKHFSKANEFLKKVGKIPIDWKIV</sequence>
<organism>
    <name type="scientific">Campylobacter jejuni subsp. jejuni serotype O:6 (strain 81116 / NCTC 11828)</name>
    <dbReference type="NCBI Taxonomy" id="407148"/>
    <lineage>
        <taxon>Bacteria</taxon>
        <taxon>Pseudomonadati</taxon>
        <taxon>Campylobacterota</taxon>
        <taxon>Epsilonproteobacteria</taxon>
        <taxon>Campylobacterales</taxon>
        <taxon>Campylobacteraceae</taxon>
        <taxon>Campylobacter</taxon>
    </lineage>
</organism>
<protein>
    <recommendedName>
        <fullName evidence="1">Uracil-DNA glycosylase</fullName>
        <shortName evidence="1">UDG</shortName>
        <ecNumber evidence="1">3.2.2.27</ecNumber>
    </recommendedName>
</protein>
<name>UNG_CAMJ8</name>
<keyword id="KW-0963">Cytoplasm</keyword>
<keyword id="KW-0227">DNA damage</keyword>
<keyword id="KW-0234">DNA repair</keyword>
<keyword id="KW-0378">Hydrolase</keyword>
<accession>A8FJP1</accession>
<comment type="function">
    <text evidence="1">Excises uracil residues from the DNA which can arise as a result of misincorporation of dUMP residues by DNA polymerase or due to deamination of cytosine.</text>
</comment>
<comment type="catalytic activity">
    <reaction evidence="1">
        <text>Hydrolyzes single-stranded DNA or mismatched double-stranded DNA and polynucleotides, releasing free uracil.</text>
        <dbReference type="EC" id="3.2.2.27"/>
    </reaction>
</comment>
<comment type="subcellular location">
    <subcellularLocation>
        <location evidence="1">Cytoplasm</location>
    </subcellularLocation>
</comment>
<comment type="similarity">
    <text evidence="1">Belongs to the uracil-DNA glycosylase (UDG) superfamily. UNG family.</text>
</comment>
<reference key="1">
    <citation type="journal article" date="2007" name="J. Bacteriol.">
        <title>The complete genome sequence of Campylobacter jejuni strain 81116 (NCTC11828).</title>
        <authorList>
            <person name="Pearson B.M."/>
            <person name="Gaskin D.J.H."/>
            <person name="Segers R.P.A.M."/>
            <person name="Wells J.M."/>
            <person name="Nuijten P.J.M."/>
            <person name="van Vliet A.H.M."/>
        </authorList>
    </citation>
    <scope>NUCLEOTIDE SEQUENCE [LARGE SCALE GENOMIC DNA]</scope>
    <source>
        <strain>81116 / NCTC 11828</strain>
    </source>
</reference>
<evidence type="ECO:0000255" key="1">
    <source>
        <dbReference type="HAMAP-Rule" id="MF_00148"/>
    </source>
</evidence>
<gene>
    <name evidence="1" type="primary">ung</name>
    <name type="ordered locus">C8J_0078</name>
</gene>
<feature type="chain" id="PRO_1000071498" description="Uracil-DNA glycosylase">
    <location>
        <begin position="1"/>
        <end position="231"/>
    </location>
</feature>
<feature type="active site" description="Proton acceptor" evidence="1">
    <location>
        <position position="74"/>
    </location>
</feature>
<dbReference type="EC" id="3.2.2.27" evidence="1"/>
<dbReference type="EMBL" id="CP000814">
    <property type="protein sequence ID" value="ABV51678.1"/>
    <property type="molecule type" value="Genomic_DNA"/>
</dbReference>
<dbReference type="RefSeq" id="WP_002876992.1">
    <property type="nucleotide sequence ID" value="NC_009839.1"/>
</dbReference>
<dbReference type="SMR" id="A8FJP1"/>
<dbReference type="KEGG" id="cju:C8J_0078"/>
<dbReference type="HOGENOM" id="CLU_032162_1_1_7"/>
<dbReference type="GO" id="GO:0005737">
    <property type="term" value="C:cytoplasm"/>
    <property type="evidence" value="ECO:0007669"/>
    <property type="project" value="UniProtKB-SubCell"/>
</dbReference>
<dbReference type="GO" id="GO:0004844">
    <property type="term" value="F:uracil DNA N-glycosylase activity"/>
    <property type="evidence" value="ECO:0007669"/>
    <property type="project" value="UniProtKB-UniRule"/>
</dbReference>
<dbReference type="GO" id="GO:0097510">
    <property type="term" value="P:base-excision repair, AP site formation via deaminated base removal"/>
    <property type="evidence" value="ECO:0007669"/>
    <property type="project" value="TreeGrafter"/>
</dbReference>
<dbReference type="CDD" id="cd10027">
    <property type="entry name" value="UDG-F1-like"/>
    <property type="match status" value="1"/>
</dbReference>
<dbReference type="FunFam" id="3.40.470.10:FF:000001">
    <property type="entry name" value="Uracil-DNA glycosylase"/>
    <property type="match status" value="1"/>
</dbReference>
<dbReference type="Gene3D" id="3.40.470.10">
    <property type="entry name" value="Uracil-DNA glycosylase-like domain"/>
    <property type="match status" value="1"/>
</dbReference>
<dbReference type="HAMAP" id="MF_00148">
    <property type="entry name" value="UDG"/>
    <property type="match status" value="1"/>
</dbReference>
<dbReference type="InterPro" id="IPR002043">
    <property type="entry name" value="UDG_fam1"/>
</dbReference>
<dbReference type="InterPro" id="IPR018085">
    <property type="entry name" value="Ura-DNA_Glyclase_AS"/>
</dbReference>
<dbReference type="InterPro" id="IPR005122">
    <property type="entry name" value="Uracil-DNA_glycosylase-like"/>
</dbReference>
<dbReference type="InterPro" id="IPR036895">
    <property type="entry name" value="Uracil-DNA_glycosylase-like_sf"/>
</dbReference>
<dbReference type="NCBIfam" id="NF003588">
    <property type="entry name" value="PRK05254.1-1"/>
    <property type="match status" value="1"/>
</dbReference>
<dbReference type="NCBIfam" id="NF003589">
    <property type="entry name" value="PRK05254.1-2"/>
    <property type="match status" value="1"/>
</dbReference>
<dbReference type="NCBIfam" id="NF003591">
    <property type="entry name" value="PRK05254.1-4"/>
    <property type="match status" value="1"/>
</dbReference>
<dbReference type="NCBIfam" id="NF003592">
    <property type="entry name" value="PRK05254.1-5"/>
    <property type="match status" value="1"/>
</dbReference>
<dbReference type="NCBIfam" id="TIGR00628">
    <property type="entry name" value="ung"/>
    <property type="match status" value="1"/>
</dbReference>
<dbReference type="PANTHER" id="PTHR11264">
    <property type="entry name" value="URACIL-DNA GLYCOSYLASE"/>
    <property type="match status" value="1"/>
</dbReference>
<dbReference type="PANTHER" id="PTHR11264:SF0">
    <property type="entry name" value="URACIL-DNA GLYCOSYLASE"/>
    <property type="match status" value="1"/>
</dbReference>
<dbReference type="Pfam" id="PF03167">
    <property type="entry name" value="UDG"/>
    <property type="match status" value="1"/>
</dbReference>
<dbReference type="SMART" id="SM00986">
    <property type="entry name" value="UDG"/>
    <property type="match status" value="1"/>
</dbReference>
<dbReference type="SMART" id="SM00987">
    <property type="entry name" value="UreE_C"/>
    <property type="match status" value="1"/>
</dbReference>
<dbReference type="SUPFAM" id="SSF52141">
    <property type="entry name" value="Uracil-DNA glycosylase-like"/>
    <property type="match status" value="1"/>
</dbReference>
<dbReference type="PROSITE" id="PS00130">
    <property type="entry name" value="U_DNA_GLYCOSYLASE"/>
    <property type="match status" value="1"/>
</dbReference>